<dbReference type="EC" id="3.-.-.-"/>
<dbReference type="EMBL" id="AB169660">
    <property type="protein sequence ID" value="BAE01741.1"/>
    <property type="molecule type" value="mRNA"/>
</dbReference>
<dbReference type="RefSeq" id="NP_001306273.1">
    <property type="nucleotide sequence ID" value="NM_001319344.1"/>
</dbReference>
<dbReference type="SMR" id="Q4R584"/>
<dbReference type="STRING" id="9541.ENSMFAP00000013448"/>
<dbReference type="ESTHER" id="macfa-q4r584">
    <property type="family name" value="ABHD8"/>
</dbReference>
<dbReference type="eggNOG" id="KOG2382">
    <property type="taxonomic scope" value="Eukaryota"/>
</dbReference>
<dbReference type="Proteomes" id="UP000233100">
    <property type="component" value="Unplaced"/>
</dbReference>
<dbReference type="GO" id="GO:0005737">
    <property type="term" value="C:cytoplasm"/>
    <property type="evidence" value="ECO:0000250"/>
    <property type="project" value="UniProtKB"/>
</dbReference>
<dbReference type="GO" id="GO:0005739">
    <property type="term" value="C:mitochondrion"/>
    <property type="evidence" value="ECO:0007669"/>
    <property type="project" value="TreeGrafter"/>
</dbReference>
<dbReference type="GO" id="GO:0052689">
    <property type="term" value="F:carboxylic ester hydrolase activity"/>
    <property type="evidence" value="ECO:0007669"/>
    <property type="project" value="TreeGrafter"/>
</dbReference>
<dbReference type="GO" id="GO:0042171">
    <property type="term" value="F:lysophosphatidic acid acyltransferase activity"/>
    <property type="evidence" value="ECO:0007669"/>
    <property type="project" value="TreeGrafter"/>
</dbReference>
<dbReference type="GO" id="GO:0055088">
    <property type="term" value="P:lipid homeostasis"/>
    <property type="evidence" value="ECO:0007669"/>
    <property type="project" value="TreeGrafter"/>
</dbReference>
<dbReference type="GO" id="GO:1900226">
    <property type="term" value="P:negative regulation of NLRP3 inflammasome complex assembly"/>
    <property type="evidence" value="ECO:0000250"/>
    <property type="project" value="UniProtKB"/>
</dbReference>
<dbReference type="GO" id="GO:0006654">
    <property type="term" value="P:phosphatidic acid biosynthetic process"/>
    <property type="evidence" value="ECO:0007669"/>
    <property type="project" value="TreeGrafter"/>
</dbReference>
<dbReference type="FunFam" id="3.40.50.1820:FF:000017">
    <property type="entry name" value="Abhydrolase domain containing 8"/>
    <property type="match status" value="1"/>
</dbReference>
<dbReference type="Gene3D" id="3.40.50.1820">
    <property type="entry name" value="alpha/beta hydrolase"/>
    <property type="match status" value="1"/>
</dbReference>
<dbReference type="InterPro" id="IPR000073">
    <property type="entry name" value="AB_hydrolase_1"/>
</dbReference>
<dbReference type="InterPro" id="IPR029058">
    <property type="entry name" value="AB_hydrolase_fold"/>
</dbReference>
<dbReference type="InterPro" id="IPR000639">
    <property type="entry name" value="Epox_hydrolase-like"/>
</dbReference>
<dbReference type="PANTHER" id="PTHR42886:SF83">
    <property type="entry name" value="PROTEIN ABHD8"/>
    <property type="match status" value="1"/>
</dbReference>
<dbReference type="PANTHER" id="PTHR42886">
    <property type="entry name" value="RE40534P-RELATED"/>
    <property type="match status" value="1"/>
</dbReference>
<dbReference type="Pfam" id="PF00561">
    <property type="entry name" value="Abhydrolase_1"/>
    <property type="match status" value="1"/>
</dbReference>
<dbReference type="PRINTS" id="PR00111">
    <property type="entry name" value="ABHYDROLASE"/>
</dbReference>
<dbReference type="PRINTS" id="PR00412">
    <property type="entry name" value="EPOXHYDRLASE"/>
</dbReference>
<dbReference type="SUPFAM" id="SSF53474">
    <property type="entry name" value="alpha/beta-Hydrolases"/>
    <property type="match status" value="1"/>
</dbReference>
<comment type="function">
    <text evidence="2">Negatively regulates NLRP3-driven inflammation. Promotes NLRP3 degradation through the chaperone-mediated autophagy (CMA) pathway, hence attenuating inflammasome activation and IL1B secretion. Acts by recruiting palmitoyltransferase ZDHHC12 to NLRP3, facilitating NLRP3 palmitoylation and subsequent degradation.</text>
</comment>
<comment type="subunit">
    <text evidence="2">Interacts with NLRP3 (via NACHT and LLR domains); this interaction is enhanced in the presence of NLRP3 inflammasome inducers, such as ATP, nigericin, silica, or alum. Interacts with ZDHHC12.</text>
</comment>
<comment type="subcellular location">
    <subcellularLocation>
        <location evidence="2">Cytoplasm</location>
    </subcellularLocation>
</comment>
<comment type="similarity">
    <text evidence="5">Belongs to the AB hydrolase superfamily.</text>
</comment>
<name>ABHD8_MACFA</name>
<sequence length="440" mass="47426">MLTGVTDGIFCCLLGTPPNAVGPLESVESSDGYTFVEVKPGRVLRVKHAGPAPASAAPPPLSASSDAAQGDLSGLVRCQRRITVYRNGRLLVENLGRAPRADLLHGQNGSGEPPAALEMELADPAGSDGRSAPGSGSGSGSGSGSGGRRRRARRPKRTIHIDCEKRITSCKGAQADVVLFFIHGVGGSLAIWKEQLDFFVRLGYEVVAPDLAGHGASSAPQVAAAYTFYALAEDMRAIFKRYAKKRNVLIGHSYGVSFCTFLAHEYPDLVHKVIMINGGGPTALEPSFCSIFNMPTCVLHCLSPCLAWSFLKAGFARQGAKEKQLLKEGNAFNVSSFVLRAMMSGQYWPEGDEVYHAELTVPVLLVHGMHDKFVPVEEDQRMAEILLLAFLKLIDEGSHMVMLECPETVNTLLHEFLLWEPEPSPKALPEPLPAPPEDKK</sequence>
<reference key="1">
    <citation type="submission" date="2005-06" db="EMBL/GenBank/DDBJ databases">
        <title>DNA sequences of macaque genes expressed in brain or testis and its evolutionary implications.</title>
        <authorList>
            <consortium name="International consortium for macaque cDNA sequencing and analysis"/>
        </authorList>
    </citation>
    <scope>NUCLEOTIDE SEQUENCE [LARGE SCALE MRNA]</scope>
    <source>
        <tissue>Brain cortex</tissue>
    </source>
</reference>
<feature type="chain" id="PRO_0000281383" description="Protein ABHD8">
    <location>
        <begin position="1"/>
        <end position="440"/>
    </location>
</feature>
<feature type="domain" description="AB hydrolase-1" evidence="3">
    <location>
        <begin position="178"/>
        <end position="280"/>
    </location>
</feature>
<feature type="region of interest" description="Disordered" evidence="4">
    <location>
        <begin position="123"/>
        <end position="158"/>
    </location>
</feature>
<feature type="compositionally biased region" description="Low complexity" evidence="4">
    <location>
        <begin position="124"/>
        <end position="134"/>
    </location>
</feature>
<feature type="compositionally biased region" description="Gly residues" evidence="4">
    <location>
        <begin position="135"/>
        <end position="146"/>
    </location>
</feature>
<feature type="compositionally biased region" description="Basic residues" evidence="4">
    <location>
        <begin position="147"/>
        <end position="158"/>
    </location>
</feature>
<feature type="active site" description="Charge relay system" evidence="1">
    <location>
        <position position="253"/>
    </location>
</feature>
<feature type="active site" description="Charge relay system" evidence="1">
    <location>
        <position position="371"/>
    </location>
</feature>
<feature type="active site" description="Charge relay system" evidence="1">
    <location>
        <position position="399"/>
    </location>
</feature>
<accession>Q4R584</accession>
<organism>
    <name type="scientific">Macaca fascicularis</name>
    <name type="common">Crab-eating macaque</name>
    <name type="synonym">Cynomolgus monkey</name>
    <dbReference type="NCBI Taxonomy" id="9541"/>
    <lineage>
        <taxon>Eukaryota</taxon>
        <taxon>Metazoa</taxon>
        <taxon>Chordata</taxon>
        <taxon>Craniata</taxon>
        <taxon>Vertebrata</taxon>
        <taxon>Euteleostomi</taxon>
        <taxon>Mammalia</taxon>
        <taxon>Eutheria</taxon>
        <taxon>Euarchontoglires</taxon>
        <taxon>Primates</taxon>
        <taxon>Haplorrhini</taxon>
        <taxon>Catarrhini</taxon>
        <taxon>Cercopithecidae</taxon>
        <taxon>Cercopithecinae</taxon>
        <taxon>Macaca</taxon>
    </lineage>
</organism>
<proteinExistence type="evidence at transcript level"/>
<evidence type="ECO:0000250" key="1"/>
<evidence type="ECO:0000250" key="2">
    <source>
        <dbReference type="UniProtKB" id="Q96I13"/>
    </source>
</evidence>
<evidence type="ECO:0000255" key="3"/>
<evidence type="ECO:0000256" key="4">
    <source>
        <dbReference type="SAM" id="MobiDB-lite"/>
    </source>
</evidence>
<evidence type="ECO:0000305" key="5"/>
<gene>
    <name evidence="2" type="primary">ABHD8</name>
    <name type="ORF">QccE-15065</name>
</gene>
<protein>
    <recommendedName>
        <fullName evidence="5">Protein ABHD8</fullName>
        <ecNumber>3.-.-.-</ecNumber>
    </recommendedName>
    <alternativeName>
        <fullName evidence="5">Alpha/beta hydrolase domain-containing protein 8</fullName>
        <shortName evidence="2">Abhydrolase domain-containing protein 8</shortName>
    </alternativeName>
</protein>
<keyword id="KW-0963">Cytoplasm</keyword>
<keyword id="KW-0378">Hydrolase</keyword>
<keyword id="KW-0395">Inflammatory response</keyword>
<keyword id="KW-1185">Reference proteome</keyword>